<keyword id="KW-0002">3D-structure</keyword>
<keyword id="KW-1003">Cell membrane</keyword>
<keyword id="KW-0472">Membrane</keyword>
<keyword id="KW-0677">Repeat</keyword>
<keyword id="KW-0812">Transmembrane</keyword>
<keyword id="KW-1133">Transmembrane helix</keyword>
<keyword id="KW-0813">Transport</keyword>
<comment type="function">
    <text>Channel that permits osmotically driven movement of water in both directions. It mediates rapid entry or exit of water in response to abrupt changes in osmolarity. Also exhibits a transient but reproducible increase in the initial glycerol flux.</text>
</comment>
<comment type="subunit">
    <text>Homotetramer.</text>
</comment>
<comment type="subcellular location">
    <subcellularLocation>
        <location>Cell membrane</location>
        <topology>Multi-pass membrane protein</topology>
    </subcellularLocation>
</comment>
<comment type="domain">
    <text>Aquaporins contain two tandem repeats each containing three membrane-spanning domains and a pore-forming loop with the signature motif Asn-Pro-Ala (NPA).</text>
</comment>
<comment type="similarity">
    <text evidence="2">Belongs to the MIP/aquaporin (TC 1.A.8) family.</text>
</comment>
<name>AQPM_METTM</name>
<protein>
    <recommendedName>
        <fullName>Aquaporin AqpM</fullName>
    </recommendedName>
</protein>
<sequence length="246" mass="25357">MVSLTKRCIAEFIGTFILVFFGAGSAAVTLMIASGGTSPNPFNIGIGLLGGLGDWVAIGLAFGFAIAASIYALGNISGCHINPAVTIGLWSVKKFPGREVVPYIIAQLLGAAFGSFIFLQCAGIGAATVGGLGATAPFPGISYWQAMLAEVVGTFLLMITIMGIAVDERAPKGFAGIIIGLTVAGIITTLGNISGSSLNPARTFGPYLNDMIFAGTNLWNYYPIYVIGPIVGAVLAALTYQYLTSE</sequence>
<organism>
    <name type="scientific">Methanothermobacter marburgensis (strain ATCC BAA-927 / DSM 2133 / JCM 14651 / NBRC 100331 / OCM 82 / Marburg)</name>
    <name type="common">Methanobacterium thermoautotrophicum</name>
    <dbReference type="NCBI Taxonomy" id="79929"/>
    <lineage>
        <taxon>Archaea</taxon>
        <taxon>Methanobacteriati</taxon>
        <taxon>Methanobacteriota</taxon>
        <taxon>Methanomada group</taxon>
        <taxon>Methanobacteria</taxon>
        <taxon>Methanobacteriales</taxon>
        <taxon>Methanobacteriaceae</taxon>
        <taxon>Methanothermobacter</taxon>
    </lineage>
</organism>
<accession>Q9C4Z5</accession>
<accession>D9PV98</accession>
<dbReference type="EMBL" id="AB055880">
    <property type="protein sequence ID" value="BAB32660.1"/>
    <property type="molecule type" value="Genomic_DNA"/>
</dbReference>
<dbReference type="EMBL" id="CP001710">
    <property type="protein sequence ID" value="ADL58146.1"/>
    <property type="molecule type" value="Genomic_DNA"/>
</dbReference>
<dbReference type="RefSeq" id="WP_013295370.1">
    <property type="nucleotide sequence ID" value="NC_014408.1"/>
</dbReference>
<dbReference type="PDB" id="2EVU">
    <property type="method" value="X-ray"/>
    <property type="resolution" value="2.30 A"/>
    <property type="chains" value="A=1-246"/>
</dbReference>
<dbReference type="PDB" id="2F2B">
    <property type="method" value="X-ray"/>
    <property type="resolution" value="1.68 A"/>
    <property type="chains" value="A=1-246"/>
</dbReference>
<dbReference type="PDBsum" id="2EVU"/>
<dbReference type="PDBsum" id="2F2B"/>
<dbReference type="SMR" id="Q9C4Z5"/>
<dbReference type="STRING" id="79929.MTBMA_c05510"/>
<dbReference type="TCDB" id="1.A.8.13.2">
    <property type="family name" value="the major intrinsic protein (mip) family"/>
</dbReference>
<dbReference type="PaxDb" id="79929-MTBMA_c05510"/>
<dbReference type="GeneID" id="77399332"/>
<dbReference type="GeneID" id="9704259"/>
<dbReference type="KEGG" id="mmg:MTBMA_c05510"/>
<dbReference type="PATRIC" id="fig|79929.8.peg.535"/>
<dbReference type="HOGENOM" id="CLU_020019_3_1_2"/>
<dbReference type="OrthoDB" id="36050at2157"/>
<dbReference type="EvolutionaryTrace" id="Q9C4Z5"/>
<dbReference type="Proteomes" id="UP000000345">
    <property type="component" value="Chromosome"/>
</dbReference>
<dbReference type="GO" id="GO:0005886">
    <property type="term" value="C:plasma membrane"/>
    <property type="evidence" value="ECO:0007669"/>
    <property type="project" value="UniProtKB-SubCell"/>
</dbReference>
<dbReference type="GO" id="GO:0015250">
    <property type="term" value="F:water channel activity"/>
    <property type="evidence" value="ECO:0007669"/>
    <property type="project" value="TreeGrafter"/>
</dbReference>
<dbReference type="Gene3D" id="1.20.1080.10">
    <property type="entry name" value="Glycerol uptake facilitator protein"/>
    <property type="match status" value="1"/>
</dbReference>
<dbReference type="InterPro" id="IPR023271">
    <property type="entry name" value="Aquaporin-like"/>
</dbReference>
<dbReference type="InterPro" id="IPR034294">
    <property type="entry name" value="Aquaporin_transptr"/>
</dbReference>
<dbReference type="InterPro" id="IPR000425">
    <property type="entry name" value="MIP"/>
</dbReference>
<dbReference type="InterPro" id="IPR022357">
    <property type="entry name" value="MIP_CS"/>
</dbReference>
<dbReference type="NCBIfam" id="TIGR00861">
    <property type="entry name" value="MIP"/>
    <property type="match status" value="1"/>
</dbReference>
<dbReference type="PANTHER" id="PTHR19139">
    <property type="entry name" value="AQUAPORIN TRANSPORTER"/>
    <property type="match status" value="1"/>
</dbReference>
<dbReference type="PANTHER" id="PTHR19139:SF199">
    <property type="entry name" value="MIP17260P"/>
    <property type="match status" value="1"/>
</dbReference>
<dbReference type="Pfam" id="PF00230">
    <property type="entry name" value="MIP"/>
    <property type="match status" value="1"/>
</dbReference>
<dbReference type="PRINTS" id="PR00783">
    <property type="entry name" value="MINTRINSICP"/>
</dbReference>
<dbReference type="SUPFAM" id="SSF81338">
    <property type="entry name" value="Aquaporin-like"/>
    <property type="match status" value="1"/>
</dbReference>
<dbReference type="PROSITE" id="PS00221">
    <property type="entry name" value="MIP"/>
    <property type="match status" value="1"/>
</dbReference>
<gene>
    <name type="primary">aqpM</name>
    <name type="ordered locus">MTBMA_c05510</name>
</gene>
<proteinExistence type="evidence at protein level"/>
<evidence type="ECO:0000255" key="1"/>
<evidence type="ECO:0000305" key="2"/>
<evidence type="ECO:0007829" key="3">
    <source>
        <dbReference type="PDB" id="2F2B"/>
    </source>
</evidence>
<feature type="chain" id="PRO_0000064006" description="Aquaporin AqpM">
    <location>
        <begin position="1"/>
        <end position="246"/>
    </location>
</feature>
<feature type="topological domain" description="Cytoplasmic" evidence="1">
    <location>
        <begin position="1"/>
        <end position="11"/>
    </location>
</feature>
<feature type="transmembrane region" description="Helical" evidence="1">
    <location>
        <begin position="12"/>
        <end position="32"/>
    </location>
</feature>
<feature type="topological domain" description="Extracellular" evidence="1">
    <location>
        <begin position="33"/>
        <end position="55"/>
    </location>
</feature>
<feature type="transmembrane region" description="Helical" evidence="1">
    <location>
        <begin position="56"/>
        <end position="76"/>
    </location>
</feature>
<feature type="topological domain" description="Cytoplasmic" evidence="1">
    <location>
        <begin position="77"/>
        <end position="103"/>
    </location>
</feature>
<feature type="transmembrane region" description="Helical" evidence="1">
    <location>
        <begin position="104"/>
        <end position="124"/>
    </location>
</feature>
<feature type="topological domain" description="Extracellular" evidence="1">
    <location>
        <begin position="125"/>
        <end position="145"/>
    </location>
</feature>
<feature type="transmembrane region" description="Helical" evidence="1">
    <location>
        <begin position="146"/>
        <end position="166"/>
    </location>
</feature>
<feature type="topological domain" description="Cytoplasmic" evidence="1">
    <location>
        <begin position="167"/>
        <end position="172"/>
    </location>
</feature>
<feature type="transmembrane region" description="Helical" evidence="1">
    <location>
        <begin position="173"/>
        <end position="193"/>
    </location>
</feature>
<feature type="topological domain" description="Extracellular" evidence="1">
    <location>
        <begin position="194"/>
        <end position="217"/>
    </location>
</feature>
<feature type="transmembrane region" description="Helical" evidence="1">
    <location>
        <begin position="218"/>
        <end position="238"/>
    </location>
</feature>
<feature type="topological domain" description="Cytoplasmic" evidence="1">
    <location>
        <begin position="239"/>
        <end position="246"/>
    </location>
</feature>
<feature type="short sequence motif" description="NPA 1">
    <location>
        <begin position="82"/>
        <end position="84"/>
    </location>
</feature>
<feature type="short sequence motif" description="NPA 2">
    <location>
        <begin position="199"/>
        <end position="201"/>
    </location>
</feature>
<feature type="sequence conflict" description="In Ref. 2; no nucleotide entry." evidence="2" ref="2">
    <original>N</original>
    <variation>D</variation>
    <location>
        <position position="217"/>
    </location>
</feature>
<feature type="sequence conflict" description="In Ref. 2; no nucleotide entry." evidence="2" ref="2">
    <original>P</original>
    <variation>S</variation>
    <location>
        <position position="223"/>
    </location>
</feature>
<feature type="helix" evidence="3">
    <location>
        <begin position="4"/>
        <end position="33"/>
    </location>
</feature>
<feature type="turn" evidence="3">
    <location>
        <begin position="46"/>
        <end position="51"/>
    </location>
</feature>
<feature type="helix" evidence="3">
    <location>
        <begin position="52"/>
        <end position="73"/>
    </location>
</feature>
<feature type="turn" evidence="3">
    <location>
        <begin position="74"/>
        <end position="76"/>
    </location>
</feature>
<feature type="helix" evidence="3">
    <location>
        <begin position="83"/>
        <end position="91"/>
    </location>
</feature>
<feature type="helix" evidence="3">
    <location>
        <begin position="97"/>
        <end position="99"/>
    </location>
</feature>
<feature type="helix" evidence="3">
    <location>
        <begin position="100"/>
        <end position="122"/>
    </location>
</feature>
<feature type="helix" evidence="3">
    <location>
        <begin position="125"/>
        <end position="128"/>
    </location>
</feature>
<feature type="helix" evidence="3">
    <location>
        <begin position="131"/>
        <end position="133"/>
    </location>
</feature>
<feature type="helix" evidence="3">
    <location>
        <begin position="143"/>
        <end position="164"/>
    </location>
</feature>
<feature type="helix" evidence="3">
    <location>
        <begin position="175"/>
        <end position="194"/>
    </location>
</feature>
<feature type="helix" evidence="3">
    <location>
        <begin position="200"/>
        <end position="214"/>
    </location>
</feature>
<feature type="helix" evidence="3">
    <location>
        <begin position="219"/>
        <end position="223"/>
    </location>
</feature>
<feature type="helix" evidence="3">
    <location>
        <begin position="224"/>
        <end position="243"/>
    </location>
</feature>
<reference key="1">
    <citation type="journal article" date="2001" name="J. Biosci. Bioeng.">
        <title>Rapid amplification of a water channel-like gene and its flanking sequences from the Methanothermobacter marburgensis genome using a single primer PCR strategy.</title>
        <authorList>
            <person name="Ding X."/>
            <person name="Kitagawa Y."/>
        </authorList>
    </citation>
    <scope>NUCLEOTIDE SEQUENCE [GENOMIC DNA]</scope>
    <source>
        <strain>ATCC BAA-927 / DSM 2133 / JCM 14651 / NBRC 100331 / OCM 82 / Marburg</strain>
    </source>
</reference>
<reference key="2">
    <citation type="submission" date="2004-07" db="UniProtKB">
        <authorList>
            <person name="Kozono D."/>
            <person name="Ding X."/>
            <person name="Iwasaki I."/>
            <person name="Meng X."/>
            <person name="Kamagata Y."/>
            <person name="Agre P."/>
            <person name="Kitagawa Y."/>
        </authorList>
    </citation>
    <scope>SEQUENCE REVISION TO 51; 217 AND 223</scope>
</reference>
<reference key="3">
    <citation type="journal article" date="2010" name="J. Bacteriol.">
        <title>Complete genome sequence of Methanothermobacter marburgensis, a methanoarchaeon model organism.</title>
        <authorList>
            <person name="Liesegang H."/>
            <person name="Kaster A.K."/>
            <person name="Wiezer A."/>
            <person name="Goenrich M."/>
            <person name="Wollherr A."/>
            <person name="Seedorf H."/>
            <person name="Gottschalk G."/>
            <person name="Thauer R.K."/>
        </authorList>
    </citation>
    <scope>NUCLEOTIDE SEQUENCE [LARGE SCALE GENOMIC DNA]</scope>
    <source>
        <strain>ATCC BAA-927 / DSM 2133 / JCM 14651 / NBRC 100331 / OCM 82 / Marburg</strain>
    </source>
</reference>
<reference key="4">
    <citation type="journal article" date="2003" name="J. Biol. Chem.">
        <title>Functional expression and characterization of an archaeal aquaporin. AqpM from Methanothermobacter marburgensis.</title>
        <authorList>
            <person name="Kozono D."/>
            <person name="Ding X."/>
            <person name="Iwasaki I."/>
            <person name="Meng X."/>
            <person name="Kamagata Y."/>
            <person name="Agre P."/>
            <person name="Kitagawa Y."/>
        </authorList>
    </citation>
    <scope>CHARACTERIZATION</scope>
    <source>
        <strain>ATCC BAA-927 / DSM 2133 / JCM 14651 / NBRC 100331 / OCM 82 / Marburg</strain>
    </source>
</reference>